<organism>
    <name type="scientific">Bos taurus</name>
    <name type="common">Bovine</name>
    <dbReference type="NCBI Taxonomy" id="9913"/>
    <lineage>
        <taxon>Eukaryota</taxon>
        <taxon>Metazoa</taxon>
        <taxon>Chordata</taxon>
        <taxon>Craniata</taxon>
        <taxon>Vertebrata</taxon>
        <taxon>Euteleostomi</taxon>
        <taxon>Mammalia</taxon>
        <taxon>Eutheria</taxon>
        <taxon>Laurasiatheria</taxon>
        <taxon>Artiodactyla</taxon>
        <taxon>Ruminantia</taxon>
        <taxon>Pecora</taxon>
        <taxon>Bovidae</taxon>
        <taxon>Bovinae</taxon>
        <taxon>Bos</taxon>
    </lineage>
</organism>
<accession>P23795</accession>
<accession>O97579</accession>
<accession>Q08D79</accession>
<sequence>MRPPWCPLHTPSLTPPLLLLLFLIGGGAEAEGPEDPELLVMVRGGRLRGLRLMAPRGPVSAFLGIPFAEPPVGPRRFLPPEPKRPWPGVLNATAFQSVCYQYVDTLYPGFEGTEMWNPNRELSEDCLYLNVWTPYPRPSSPTPVLVWIYGGGFYSGASSLDVYDGRFLTQAEGTVLVSMNYRVGAFGFLALPGSREAPGNVGLLDQRLALQWVQENVAAFGGDPTSVTLFGESAGAASVGMHLLSPPSRGLFHRAVLQSGAPNGPWATVGVGEARRRATLLARLVGCPPGGAGGNDTELVACLRARPAQDLVDHEWRVLPQESVFRFSFVPVVDGDFLSDTPEALINAGDFHGLQVLVGVVKDEGSYFLVYGAPGFSKDNESLISRAQFLAGVRVGVPQASDLAAEAVVLHYTDWLHPEDPARLREALSDVVGDHNVVCPVAQLAGRLAAQGARVYAYIFEHRASTLSWPLWMGVPHGYEIEFIFGLPLEPSLNYTIEERTFAQRLMRYWANFARTGDPNDPRDPKAPQWPPYTAGAQQYVSLNLRPLEVRRGLRAQACAFWNRFLPKLLSATDTLDEAERQWKAEFHRWSSYMVHWKNQFDHYSKQDRCSDL</sequence>
<keyword id="KW-0025">Alternative splicing</keyword>
<keyword id="KW-1003">Cell membrane</keyword>
<keyword id="KW-0903">Direct protein sequencing</keyword>
<keyword id="KW-1015">Disulfide bond</keyword>
<keyword id="KW-0325">Glycoprotein</keyword>
<keyword id="KW-0336">GPI-anchor</keyword>
<keyword id="KW-0378">Hydrolase</keyword>
<keyword id="KW-0449">Lipoprotein</keyword>
<keyword id="KW-0472">Membrane</keyword>
<keyword id="KW-0531">Neurotransmitter degradation</keyword>
<keyword id="KW-1185">Reference proteome</keyword>
<keyword id="KW-0964">Secreted</keyword>
<keyword id="KW-0719">Serine esterase</keyword>
<keyword id="KW-0732">Signal</keyword>
<keyword id="KW-0770">Synapse</keyword>
<proteinExistence type="evidence at protein level"/>
<reference key="1">
    <citation type="journal article" date="1998" name="Biochem. J.">
        <title>Bovine acetylcholinesterase: cloning, expression and characterization.</title>
        <authorList>
            <person name="Mendelson I."/>
            <person name="Kronman C."/>
            <person name="Ariel N."/>
            <person name="Shafferman A."/>
            <person name="Velan B."/>
        </authorList>
    </citation>
    <scope>NUCLEOTIDE SEQUENCE [GENOMIC DNA]</scope>
    <scope>CHARACTERIZATION</scope>
    <source>
        <tissue>Kidney</tissue>
    </source>
</reference>
<reference key="2">
    <citation type="submission" date="2006-09" db="EMBL/GenBank/DDBJ databases">
        <authorList>
            <consortium name="NIH - Mammalian Gene Collection (MGC) project"/>
        </authorList>
    </citation>
    <scope>NUCLEOTIDE SEQUENCE [LARGE SCALE MRNA] (ISOFORM T)</scope>
    <source>
        <strain>Hereford</strain>
        <tissue>Basal ganglia</tissue>
    </source>
</reference>
<reference key="3">
    <citation type="journal article" date="1990" name="FEBS Lett.">
        <title>Complete amino acid sequence of fetal bovine serum acetylcholinesterase and its comparison in various regions with other cholinesterases.</title>
        <authorList>
            <person name="Doctor B.P."/>
            <person name="Chapman T.C."/>
            <person name="Christner C.E."/>
            <person name="Deal C.D."/>
            <person name="de la Hoz D.M."/>
            <person name="Gentry M.K."/>
            <person name="Ogert R.A."/>
            <person name="Rush R.S."/>
            <person name="Smyth K.K."/>
            <person name="Wolfe A.D."/>
        </authorList>
    </citation>
    <scope>PROTEIN SEQUENCE OF 31-613 (ISOFORM H)</scope>
    <source>
        <tissue>Fetal serum</tissue>
    </source>
</reference>
<gene>
    <name type="primary">ACHE</name>
</gene>
<dbReference type="EC" id="3.1.1.7"/>
<dbReference type="EMBL" id="AF061815">
    <property type="protein sequence ID" value="AAC64270.1"/>
    <property type="molecule type" value="Genomic_DNA"/>
</dbReference>
<dbReference type="EMBL" id="AF061813">
    <property type="protein sequence ID" value="AAC64270.1"/>
    <property type="status" value="JOINED"/>
    <property type="molecule type" value="Genomic_DNA"/>
</dbReference>
<dbReference type="EMBL" id="AF061814">
    <property type="protein sequence ID" value="AAC64270.1"/>
    <property type="status" value="JOINED"/>
    <property type="molecule type" value="Genomic_DNA"/>
</dbReference>
<dbReference type="EMBL" id="BC123898">
    <property type="protein sequence ID" value="AAI23899.1"/>
    <property type="molecule type" value="mRNA"/>
</dbReference>
<dbReference type="RefSeq" id="NP_001069688.1">
    <property type="nucleotide sequence ID" value="NM_001076220.1"/>
</dbReference>
<dbReference type="SMR" id="P23795"/>
<dbReference type="CORUM" id="P23795"/>
<dbReference type="FunCoup" id="P23795">
    <property type="interactions" value="201"/>
</dbReference>
<dbReference type="STRING" id="9913.ENSBTAP00000001517"/>
<dbReference type="BindingDB" id="P23795"/>
<dbReference type="ChEMBL" id="CHEMBL4768"/>
<dbReference type="DrugCentral" id="P23795"/>
<dbReference type="ESTHER" id="bovin-ACHE">
    <property type="family name" value="ACHE"/>
</dbReference>
<dbReference type="MEROPS" id="S09.979"/>
<dbReference type="GlyConnect" id="8">
    <property type="glycosylation" value="21 N-Linked glycans"/>
</dbReference>
<dbReference type="GlyCosmos" id="P23795">
    <property type="glycosylation" value="4 sites, 42 glycans"/>
</dbReference>
<dbReference type="GlyGen" id="P23795">
    <property type="glycosylation" value="5 sites, 42 N-linked glycans (1 site)"/>
</dbReference>
<dbReference type="PaxDb" id="9913-ENSBTAP00000001517"/>
<dbReference type="GeneID" id="540446"/>
<dbReference type="KEGG" id="bta:540446"/>
<dbReference type="CTD" id="43"/>
<dbReference type="eggNOG" id="KOG4389">
    <property type="taxonomic scope" value="Eukaryota"/>
</dbReference>
<dbReference type="InParanoid" id="P23795"/>
<dbReference type="OrthoDB" id="9000293at2759"/>
<dbReference type="BRENDA" id="3.1.1.7">
    <property type="organism ID" value="908"/>
</dbReference>
<dbReference type="Proteomes" id="UP000009136">
    <property type="component" value="Unplaced"/>
</dbReference>
<dbReference type="GO" id="GO:0005615">
    <property type="term" value="C:extracellular space"/>
    <property type="evidence" value="ECO:0000318"/>
    <property type="project" value="GO_Central"/>
</dbReference>
<dbReference type="GO" id="GO:0005886">
    <property type="term" value="C:plasma membrane"/>
    <property type="evidence" value="ECO:0000318"/>
    <property type="project" value="GO_Central"/>
</dbReference>
<dbReference type="GO" id="GO:0098552">
    <property type="term" value="C:side of membrane"/>
    <property type="evidence" value="ECO:0007669"/>
    <property type="project" value="UniProtKB-KW"/>
</dbReference>
<dbReference type="GO" id="GO:0045202">
    <property type="term" value="C:synapse"/>
    <property type="evidence" value="ECO:0007669"/>
    <property type="project" value="UniProtKB-SubCell"/>
</dbReference>
<dbReference type="GO" id="GO:0003990">
    <property type="term" value="F:acetylcholinesterase activity"/>
    <property type="evidence" value="ECO:0000318"/>
    <property type="project" value="GO_Central"/>
</dbReference>
<dbReference type="GO" id="GO:0001540">
    <property type="term" value="F:amyloid-beta binding"/>
    <property type="evidence" value="ECO:0000314"/>
    <property type="project" value="HGNC-UCL"/>
</dbReference>
<dbReference type="GO" id="GO:0006581">
    <property type="term" value="P:acetylcholine catabolic process"/>
    <property type="evidence" value="ECO:0000318"/>
    <property type="project" value="GO_Central"/>
</dbReference>
<dbReference type="GO" id="GO:0019695">
    <property type="term" value="P:choline metabolic process"/>
    <property type="evidence" value="ECO:0000318"/>
    <property type="project" value="GO_Central"/>
</dbReference>
<dbReference type="CDD" id="cd00312">
    <property type="entry name" value="Esterase_lipase"/>
    <property type="match status" value="1"/>
</dbReference>
<dbReference type="FunFam" id="3.40.50.1820:FF:000029">
    <property type="entry name" value="Acetylcholinesterase"/>
    <property type="match status" value="1"/>
</dbReference>
<dbReference type="Gene3D" id="3.40.50.1820">
    <property type="entry name" value="alpha/beta hydrolase"/>
    <property type="match status" value="1"/>
</dbReference>
<dbReference type="InterPro" id="IPR029058">
    <property type="entry name" value="AB_hydrolase_fold"/>
</dbReference>
<dbReference type="InterPro" id="IPR050654">
    <property type="entry name" value="AChE-related_enzymes"/>
</dbReference>
<dbReference type="InterPro" id="IPR014788">
    <property type="entry name" value="AChE_tetra"/>
</dbReference>
<dbReference type="InterPro" id="IPR002018">
    <property type="entry name" value="CarbesteraseB"/>
</dbReference>
<dbReference type="InterPro" id="IPR019826">
    <property type="entry name" value="Carboxylesterase_B_AS"/>
</dbReference>
<dbReference type="InterPro" id="IPR019819">
    <property type="entry name" value="Carboxylesterase_B_CS"/>
</dbReference>
<dbReference type="InterPro" id="IPR000997">
    <property type="entry name" value="Cholinesterase"/>
</dbReference>
<dbReference type="PANTHER" id="PTHR43918">
    <property type="entry name" value="ACETYLCHOLINESTERASE"/>
    <property type="match status" value="1"/>
</dbReference>
<dbReference type="PANTHER" id="PTHR43918:SF11">
    <property type="entry name" value="ACETYLCHOLINESTERASE"/>
    <property type="match status" value="1"/>
</dbReference>
<dbReference type="Pfam" id="PF08674">
    <property type="entry name" value="AChE_tetra"/>
    <property type="match status" value="1"/>
</dbReference>
<dbReference type="Pfam" id="PF00135">
    <property type="entry name" value="COesterase"/>
    <property type="match status" value="1"/>
</dbReference>
<dbReference type="PRINTS" id="PR00878">
    <property type="entry name" value="CHOLNESTRASE"/>
</dbReference>
<dbReference type="SUPFAM" id="SSF53474">
    <property type="entry name" value="alpha/beta-Hydrolases"/>
    <property type="match status" value="1"/>
</dbReference>
<dbReference type="PROSITE" id="PS00122">
    <property type="entry name" value="CARBOXYLESTERASE_B_1"/>
    <property type="match status" value="1"/>
</dbReference>
<dbReference type="PROSITE" id="PS00941">
    <property type="entry name" value="CARBOXYLESTERASE_B_2"/>
    <property type="match status" value="1"/>
</dbReference>
<name>ACES_BOVIN</name>
<protein>
    <recommendedName>
        <fullName>Acetylcholinesterase</fullName>
        <shortName>AChE</shortName>
        <ecNumber>3.1.1.7</ecNumber>
    </recommendedName>
</protein>
<comment type="function">
    <text>Terminates signal transduction at the neuromuscular junction by rapid hydrolysis of the acetylcholine released into the synaptic cleft.</text>
</comment>
<comment type="catalytic activity">
    <reaction>
        <text>acetylcholine + H2O = choline + acetate + H(+)</text>
        <dbReference type="Rhea" id="RHEA:17561"/>
        <dbReference type="ChEBI" id="CHEBI:15354"/>
        <dbReference type="ChEBI" id="CHEBI:15355"/>
        <dbReference type="ChEBI" id="CHEBI:15377"/>
        <dbReference type="ChEBI" id="CHEBI:15378"/>
        <dbReference type="ChEBI" id="CHEBI:30089"/>
        <dbReference type="EC" id="3.1.1.7"/>
    </reaction>
</comment>
<comment type="subunit">
    <text evidence="1">Interacts with PRIMA1. The interaction with PRIMA1 is required to anchor it to the basal lamina of cells and organize into tetramers (By similarity). Isoform H generates GPI-anchored dimers; disulfide linked. Isoform T generates multiple structures, ranging from monomers and dimers to collagen-tailed and hydrophobic-tailed forms, in which catalytic tetramers are associated with anchoring proteins that attach them to the basal lamina or to cell membranes. In the collagen-tailed forms, isoform T subunits are associated with a specific collagen, COLQ, which triggers the formation of isoform T tetramers, from monomers and dimers.</text>
</comment>
<comment type="subcellular location">
    <subcellularLocation>
        <location>Synapse</location>
    </subcellularLocation>
    <subcellularLocation>
        <location>Secreted</location>
    </subcellularLocation>
    <subcellularLocation>
        <location evidence="1">Cell membrane</location>
        <topology evidence="1">Peripheral membrane protein</topology>
    </subcellularLocation>
</comment>
<comment type="subcellular location">
    <molecule>Isoform H</molecule>
    <subcellularLocation>
        <location>Cell membrane</location>
        <topology>Lipid-anchor</topology>
        <topology>GPI-anchor</topology>
        <orientation>Extracellular side</orientation>
    </subcellularLocation>
</comment>
<comment type="alternative products">
    <event type="alternative splicing"/>
    <isoform>
        <id>P23795-1</id>
        <name>T</name>
        <sequence type="displayed"/>
    </isoform>
    <isoform>
        <id>P23795-2</id>
        <name>H</name>
        <sequence type="described" ref="VSP_001455"/>
    </isoform>
</comment>
<comment type="similarity">
    <text evidence="3">Belongs to the type-B carboxylesterase/lipase family.</text>
</comment>
<evidence type="ECO:0000250" key="1"/>
<evidence type="ECO:0000255" key="2">
    <source>
        <dbReference type="PROSITE-ProRule" id="PRU10039"/>
    </source>
</evidence>
<evidence type="ECO:0000305" key="3"/>
<feature type="signal peptide">
    <location>
        <begin position="1"/>
        <end position="30"/>
    </location>
</feature>
<feature type="chain" id="PRO_0000008585" description="Acetylcholinesterase">
    <location>
        <begin position="31"/>
        <end position="613"/>
    </location>
</feature>
<feature type="active site" description="Acyl-ester intermediate" evidence="2">
    <location>
        <position position="233"/>
    </location>
</feature>
<feature type="active site" description="Charge relay system" evidence="1">
    <location>
        <position position="364"/>
    </location>
</feature>
<feature type="active site" description="Charge relay system" evidence="1">
    <location>
        <position position="477"/>
    </location>
</feature>
<feature type="glycosylation site" description="N-linked (GlcNAc...) asparagine" evidence="3">
    <location>
        <position position="91"/>
    </location>
</feature>
<feature type="glycosylation site" description="N-linked (GlcNAc...) asparagine" evidence="3">
    <location>
        <position position="295"/>
    </location>
</feature>
<feature type="glycosylation site" description="N-linked (GlcNAc...) asparagine" evidence="3">
    <location>
        <position position="380"/>
    </location>
</feature>
<feature type="glycosylation site" description="N-linked (GlcNAc...) asparagine" evidence="3">
    <location>
        <position position="494"/>
    </location>
</feature>
<feature type="disulfide bond" evidence="1">
    <location>
        <begin position="99"/>
        <end position="126"/>
    </location>
</feature>
<feature type="disulfide bond" evidence="1">
    <location>
        <begin position="287"/>
        <end position="302"/>
    </location>
</feature>
<feature type="disulfide bond" evidence="1">
    <location>
        <begin position="439"/>
        <end position="559"/>
    </location>
</feature>
<feature type="disulfide bond" description="Interchain" evidence="1">
    <location>
        <position position="610"/>
    </location>
</feature>
<feature type="splice variant" id="VSP_001455" description="In isoform H." evidence="3">
    <original>DTLDEAERQWKAEFHRWSSYMVHWKNQFDHYSKQDRCSDL</original>
    <variation>ASEAPCTCSGPAHGEAAPRPRPGLPLPLLLLLFLLSRLLRL</variation>
    <location>
        <begin position="574"/>
        <end position="613"/>
    </location>
</feature>
<feature type="sequence conflict" description="In Ref. 2; AAI23899." evidence="3" ref="2">
    <original>I</original>
    <variation>L</variation>
    <location>
        <position position="24"/>
    </location>
</feature>
<feature type="sequence conflict" description="In Ref. 3; AA sequence." evidence="3" ref="3">
    <original>R</original>
    <variation>E</variation>
    <location>
        <position position="46"/>
    </location>
</feature>
<feature type="sequence conflict" description="In Ref. 3; AA sequence." evidence="3" ref="3">
    <original>T</original>
    <variation>V</variation>
    <location>
        <position position="169"/>
    </location>
</feature>
<feature type="sequence conflict" description="In Ref. 3; AA sequence." evidence="3" ref="3">
    <original>W</original>
    <variation>S</variation>
    <location>
        <position position="212"/>
    </location>
</feature>
<feature type="sequence conflict" description="In Ref. 3; AA sequence." evidence="3" ref="3">
    <original>S</original>
    <variation>H</variation>
    <location>
        <position position="323"/>
    </location>
</feature>
<feature type="sequence conflict" description="In Ref. 3; AA sequence." evidence="3" ref="3">
    <original>H</original>
    <variation>V</variation>
    <location>
        <position position="352"/>
    </location>
</feature>
<feature type="sequence conflict" description="In Ref. 3; AA sequence." evidence="3" ref="3">
    <original>L</original>
    <variation>W</variation>
    <location>
        <position position="424"/>
    </location>
</feature>
<feature type="sequence conflict" description="In Ref. 3; AA sequence." evidence="3" ref="3">
    <original>D</original>
    <variation>A</variation>
    <location>
        <position position="524"/>
    </location>
</feature>
<feature type="sequence conflict" description="In Ref. 3; AA sequence." evidence="3" ref="3">
    <original>EVRRGL</original>
    <variation>GVPQAS</variation>
    <location>
        <begin position="549"/>
        <end position="554"/>
    </location>
</feature>
<feature type="sequence conflict" description="In Ref. 3; AA sequence." evidence="3" ref="3">
    <original>S</original>
    <variation>N</variation>
    <location>
        <position position="571"/>
    </location>
</feature>